<proteinExistence type="inferred from homology"/>
<dbReference type="EMBL" id="CP000255">
    <property type="protein sequence ID" value="ABD22897.1"/>
    <property type="molecule type" value="Genomic_DNA"/>
</dbReference>
<dbReference type="RefSeq" id="WP_000752917.1">
    <property type="nucleotide sequence ID" value="NZ_CP027476.1"/>
</dbReference>
<dbReference type="SMR" id="Q2FIG2"/>
<dbReference type="KEGG" id="saa:SAUSA300_0816"/>
<dbReference type="HOGENOM" id="CLU_135567_0_3_9"/>
<dbReference type="OMA" id="IKHRTEE"/>
<dbReference type="Proteomes" id="UP000001939">
    <property type="component" value="Chromosome"/>
</dbReference>
<dbReference type="Gene3D" id="1.10.1470.10">
    <property type="entry name" value="YjbJ"/>
    <property type="match status" value="1"/>
</dbReference>
<dbReference type="InterPro" id="IPR008462">
    <property type="entry name" value="CsbD"/>
</dbReference>
<dbReference type="InterPro" id="IPR050423">
    <property type="entry name" value="UPF0337_stress_rsp"/>
</dbReference>
<dbReference type="InterPro" id="IPR036629">
    <property type="entry name" value="YjbJ_sf"/>
</dbReference>
<dbReference type="PANTHER" id="PTHR34977">
    <property type="entry name" value="UPF0337 PROTEIN YJBJ"/>
    <property type="match status" value="1"/>
</dbReference>
<dbReference type="PANTHER" id="PTHR34977:SF1">
    <property type="entry name" value="UPF0337 PROTEIN YJBJ"/>
    <property type="match status" value="1"/>
</dbReference>
<dbReference type="Pfam" id="PF05532">
    <property type="entry name" value="CsbD"/>
    <property type="match status" value="1"/>
</dbReference>
<dbReference type="SUPFAM" id="SSF69047">
    <property type="entry name" value="Hypothetical protein YjbJ"/>
    <property type="match status" value="1"/>
</dbReference>
<gene>
    <name type="ordered locus">SAUSA300_0816</name>
</gene>
<evidence type="ECO:0000256" key="1">
    <source>
        <dbReference type="SAM" id="MobiDB-lite"/>
    </source>
</evidence>
<evidence type="ECO:0000305" key="2"/>
<comment type="similarity">
    <text evidence="2">Belongs to the UPF0337 (CsbD) family.</text>
</comment>
<organism>
    <name type="scientific">Staphylococcus aureus (strain USA300)</name>
    <dbReference type="NCBI Taxonomy" id="367830"/>
    <lineage>
        <taxon>Bacteria</taxon>
        <taxon>Bacillati</taxon>
        <taxon>Bacillota</taxon>
        <taxon>Bacilli</taxon>
        <taxon>Bacillales</taxon>
        <taxon>Staphylococcaceae</taxon>
        <taxon>Staphylococcus</taxon>
    </lineage>
</organism>
<name>Y816_STAA3</name>
<accession>Q2FIG2</accession>
<protein>
    <recommendedName>
        <fullName>UPF0337 protein SAUSA300_0816</fullName>
    </recommendedName>
</protein>
<feature type="chain" id="PRO_0000272681" description="UPF0337 protein SAUSA300_0816">
    <location>
        <begin position="1"/>
        <end position="64"/>
    </location>
</feature>
<feature type="region of interest" description="Disordered" evidence="1">
    <location>
        <begin position="1"/>
        <end position="40"/>
    </location>
</feature>
<feature type="compositionally biased region" description="Basic and acidic residues" evidence="1">
    <location>
        <begin position="25"/>
        <end position="40"/>
    </location>
</feature>
<reference key="1">
    <citation type="journal article" date="2006" name="Lancet">
        <title>Complete genome sequence of USA300, an epidemic clone of community-acquired meticillin-resistant Staphylococcus aureus.</title>
        <authorList>
            <person name="Diep B.A."/>
            <person name="Gill S.R."/>
            <person name="Chang R.F."/>
            <person name="Phan T.H."/>
            <person name="Chen J.H."/>
            <person name="Davidson M.G."/>
            <person name="Lin F."/>
            <person name="Lin J."/>
            <person name="Carleton H.A."/>
            <person name="Mongodin E.F."/>
            <person name="Sensabaugh G.F."/>
            <person name="Perdreau-Remington F."/>
        </authorList>
    </citation>
    <scope>NUCLEOTIDE SEQUENCE [LARGE SCALE GENOMIC DNA]</scope>
    <source>
        <strain>USA300</strain>
    </source>
</reference>
<sequence length="64" mass="7019">MADESKFEQAKGNVKETVGNVTDNKNLENEGKEDKASGKAKEFVENAKEKATDFIDKVKGNKGE</sequence>